<name>SYH_VIBPA</name>
<feature type="chain" id="PRO_0000136292" description="Histidine--tRNA ligase">
    <location>
        <begin position="1"/>
        <end position="422"/>
    </location>
</feature>
<dbReference type="EC" id="6.1.1.21" evidence="1"/>
<dbReference type="EMBL" id="BA000031">
    <property type="protein sequence ID" value="BAC58872.1"/>
    <property type="molecule type" value="Genomic_DNA"/>
</dbReference>
<dbReference type="RefSeq" id="NP_796988.1">
    <property type="nucleotide sequence ID" value="NC_004603.1"/>
</dbReference>
<dbReference type="RefSeq" id="WP_005460225.1">
    <property type="nucleotide sequence ID" value="NC_004603.1"/>
</dbReference>
<dbReference type="SMR" id="Q87S15"/>
<dbReference type="GeneID" id="1188084"/>
<dbReference type="KEGG" id="vpa:VP0609"/>
<dbReference type="PATRIC" id="fig|223926.6.peg.577"/>
<dbReference type="eggNOG" id="COG0124">
    <property type="taxonomic scope" value="Bacteria"/>
</dbReference>
<dbReference type="HOGENOM" id="CLU_025113_1_1_6"/>
<dbReference type="Proteomes" id="UP000002493">
    <property type="component" value="Chromosome 1"/>
</dbReference>
<dbReference type="GO" id="GO:0005737">
    <property type="term" value="C:cytoplasm"/>
    <property type="evidence" value="ECO:0007669"/>
    <property type="project" value="UniProtKB-SubCell"/>
</dbReference>
<dbReference type="GO" id="GO:0005524">
    <property type="term" value="F:ATP binding"/>
    <property type="evidence" value="ECO:0007669"/>
    <property type="project" value="UniProtKB-UniRule"/>
</dbReference>
<dbReference type="GO" id="GO:0004821">
    <property type="term" value="F:histidine-tRNA ligase activity"/>
    <property type="evidence" value="ECO:0007669"/>
    <property type="project" value="UniProtKB-UniRule"/>
</dbReference>
<dbReference type="GO" id="GO:0006427">
    <property type="term" value="P:histidyl-tRNA aminoacylation"/>
    <property type="evidence" value="ECO:0007669"/>
    <property type="project" value="UniProtKB-UniRule"/>
</dbReference>
<dbReference type="CDD" id="cd00773">
    <property type="entry name" value="HisRS-like_core"/>
    <property type="match status" value="1"/>
</dbReference>
<dbReference type="CDD" id="cd00859">
    <property type="entry name" value="HisRS_anticodon"/>
    <property type="match status" value="1"/>
</dbReference>
<dbReference type="FunFam" id="3.30.930.10:FF:000005">
    <property type="entry name" value="Histidine--tRNA ligase"/>
    <property type="match status" value="1"/>
</dbReference>
<dbReference type="Gene3D" id="3.40.50.800">
    <property type="entry name" value="Anticodon-binding domain"/>
    <property type="match status" value="1"/>
</dbReference>
<dbReference type="Gene3D" id="3.30.930.10">
    <property type="entry name" value="Bira Bifunctional Protein, Domain 2"/>
    <property type="match status" value="1"/>
</dbReference>
<dbReference type="HAMAP" id="MF_00127">
    <property type="entry name" value="His_tRNA_synth"/>
    <property type="match status" value="1"/>
</dbReference>
<dbReference type="InterPro" id="IPR006195">
    <property type="entry name" value="aa-tRNA-synth_II"/>
</dbReference>
<dbReference type="InterPro" id="IPR045864">
    <property type="entry name" value="aa-tRNA-synth_II/BPL/LPL"/>
</dbReference>
<dbReference type="InterPro" id="IPR004154">
    <property type="entry name" value="Anticodon-bd"/>
</dbReference>
<dbReference type="InterPro" id="IPR036621">
    <property type="entry name" value="Anticodon-bd_dom_sf"/>
</dbReference>
<dbReference type="InterPro" id="IPR015807">
    <property type="entry name" value="His-tRNA-ligase"/>
</dbReference>
<dbReference type="InterPro" id="IPR041715">
    <property type="entry name" value="HisRS-like_core"/>
</dbReference>
<dbReference type="InterPro" id="IPR004516">
    <property type="entry name" value="HisRS/HisZ"/>
</dbReference>
<dbReference type="InterPro" id="IPR033656">
    <property type="entry name" value="HisRS_anticodon"/>
</dbReference>
<dbReference type="NCBIfam" id="TIGR00442">
    <property type="entry name" value="hisS"/>
    <property type="match status" value="1"/>
</dbReference>
<dbReference type="PANTHER" id="PTHR43707:SF1">
    <property type="entry name" value="HISTIDINE--TRNA LIGASE, MITOCHONDRIAL-RELATED"/>
    <property type="match status" value="1"/>
</dbReference>
<dbReference type="PANTHER" id="PTHR43707">
    <property type="entry name" value="HISTIDYL-TRNA SYNTHETASE"/>
    <property type="match status" value="1"/>
</dbReference>
<dbReference type="Pfam" id="PF03129">
    <property type="entry name" value="HGTP_anticodon"/>
    <property type="match status" value="1"/>
</dbReference>
<dbReference type="Pfam" id="PF13393">
    <property type="entry name" value="tRNA-synt_His"/>
    <property type="match status" value="1"/>
</dbReference>
<dbReference type="PIRSF" id="PIRSF001549">
    <property type="entry name" value="His-tRNA_synth"/>
    <property type="match status" value="1"/>
</dbReference>
<dbReference type="SUPFAM" id="SSF52954">
    <property type="entry name" value="Class II aaRS ABD-related"/>
    <property type="match status" value="1"/>
</dbReference>
<dbReference type="SUPFAM" id="SSF55681">
    <property type="entry name" value="Class II aaRS and biotin synthetases"/>
    <property type="match status" value="1"/>
</dbReference>
<dbReference type="PROSITE" id="PS50862">
    <property type="entry name" value="AA_TRNA_LIGASE_II"/>
    <property type="match status" value="1"/>
</dbReference>
<reference key="1">
    <citation type="journal article" date="2003" name="Lancet">
        <title>Genome sequence of Vibrio parahaemolyticus: a pathogenic mechanism distinct from that of V. cholerae.</title>
        <authorList>
            <person name="Makino K."/>
            <person name="Oshima K."/>
            <person name="Kurokawa K."/>
            <person name="Yokoyama K."/>
            <person name="Uda T."/>
            <person name="Tagomori K."/>
            <person name="Iijima Y."/>
            <person name="Najima M."/>
            <person name="Nakano M."/>
            <person name="Yamashita A."/>
            <person name="Kubota Y."/>
            <person name="Kimura S."/>
            <person name="Yasunaga T."/>
            <person name="Honda T."/>
            <person name="Shinagawa H."/>
            <person name="Hattori M."/>
            <person name="Iida T."/>
        </authorList>
    </citation>
    <scope>NUCLEOTIDE SEQUENCE [LARGE SCALE GENOMIC DNA]</scope>
    <source>
        <strain>RIMD 2210633</strain>
    </source>
</reference>
<proteinExistence type="inferred from homology"/>
<comment type="catalytic activity">
    <reaction evidence="1">
        <text>tRNA(His) + L-histidine + ATP = L-histidyl-tRNA(His) + AMP + diphosphate + H(+)</text>
        <dbReference type="Rhea" id="RHEA:17313"/>
        <dbReference type="Rhea" id="RHEA-COMP:9665"/>
        <dbReference type="Rhea" id="RHEA-COMP:9689"/>
        <dbReference type="ChEBI" id="CHEBI:15378"/>
        <dbReference type="ChEBI" id="CHEBI:30616"/>
        <dbReference type="ChEBI" id="CHEBI:33019"/>
        <dbReference type="ChEBI" id="CHEBI:57595"/>
        <dbReference type="ChEBI" id="CHEBI:78442"/>
        <dbReference type="ChEBI" id="CHEBI:78527"/>
        <dbReference type="ChEBI" id="CHEBI:456215"/>
        <dbReference type="EC" id="6.1.1.21"/>
    </reaction>
</comment>
<comment type="subunit">
    <text evidence="1">Homodimer.</text>
</comment>
<comment type="subcellular location">
    <subcellularLocation>
        <location evidence="1">Cytoplasm</location>
    </subcellularLocation>
</comment>
<comment type="similarity">
    <text evidence="1">Belongs to the class-II aminoacyl-tRNA synthetase family.</text>
</comment>
<evidence type="ECO:0000255" key="1">
    <source>
        <dbReference type="HAMAP-Rule" id="MF_00127"/>
    </source>
</evidence>
<sequence length="422" mass="47146">MAKTIQAIRGMNDCLPTQSPLWQKLENTVKNVISAYGYNEVRMPIVEETNLFSRAVGEETDVVSKEMYTFDDRNGDSLTLRPEGTAGCVRSCIQNSLINRDEQRLWYMGPMFRHERPQKGRYRQFHQCGVEVFGLNGPDVDAELIMMTARLWRELGIDKHVRLELNSIGSQEDRADYRTALVAFLEQHIDVLDEDCKRRMHTNPLRVLDTKNPDIQAILGDAPRLSEYLGEESKAHFAGLCELLDAAGIEYTVNERLVRGLDYYNRTVFEWITESLGAQGTVCGGGRYDGLVEQLGGKPTPAVGFAMGLERLVLMLETLELTDVRRSVDVYVVTAGEGTMMAGMKLAEQLREAISGVRVMNHFGGGNFKKQFKRADKVGAVVALVLGENEVADNTVVLKDLVGGEQETYNQAEVAEKIAALI</sequence>
<accession>Q87S15</accession>
<organism>
    <name type="scientific">Vibrio parahaemolyticus serotype O3:K6 (strain RIMD 2210633)</name>
    <dbReference type="NCBI Taxonomy" id="223926"/>
    <lineage>
        <taxon>Bacteria</taxon>
        <taxon>Pseudomonadati</taxon>
        <taxon>Pseudomonadota</taxon>
        <taxon>Gammaproteobacteria</taxon>
        <taxon>Vibrionales</taxon>
        <taxon>Vibrionaceae</taxon>
        <taxon>Vibrio</taxon>
    </lineage>
</organism>
<keyword id="KW-0030">Aminoacyl-tRNA synthetase</keyword>
<keyword id="KW-0067">ATP-binding</keyword>
<keyword id="KW-0963">Cytoplasm</keyword>
<keyword id="KW-0436">Ligase</keyword>
<keyword id="KW-0547">Nucleotide-binding</keyword>
<keyword id="KW-0648">Protein biosynthesis</keyword>
<gene>
    <name evidence="1" type="primary">hisS</name>
    <name type="ordered locus">VP0609</name>
</gene>
<protein>
    <recommendedName>
        <fullName evidence="1">Histidine--tRNA ligase</fullName>
        <ecNumber evidence="1">6.1.1.21</ecNumber>
    </recommendedName>
    <alternativeName>
        <fullName evidence="1">Histidyl-tRNA synthetase</fullName>
        <shortName evidence="1">HisRS</shortName>
    </alternativeName>
</protein>